<organism>
    <name type="scientific">Phytoplasma australiense</name>
    <dbReference type="NCBI Taxonomy" id="59748"/>
    <lineage>
        <taxon>Bacteria</taxon>
        <taxon>Bacillati</taxon>
        <taxon>Mycoplasmatota</taxon>
        <taxon>Mollicutes</taxon>
        <taxon>Acholeplasmatales</taxon>
        <taxon>Acholeplasmataceae</taxon>
        <taxon>Candidatus Phytoplasma</taxon>
        <taxon>16SrXII (Stolbur group)</taxon>
    </lineage>
</organism>
<dbReference type="EC" id="2.1.1.228" evidence="1"/>
<dbReference type="EMBL" id="AM422018">
    <property type="protein sequence ID" value="CAM11882.1"/>
    <property type="molecule type" value="Genomic_DNA"/>
</dbReference>
<dbReference type="SMR" id="B1VAA9"/>
<dbReference type="STRING" id="59748.PA0548"/>
<dbReference type="KEGG" id="pal:PA0548"/>
<dbReference type="eggNOG" id="COG0336">
    <property type="taxonomic scope" value="Bacteria"/>
</dbReference>
<dbReference type="Proteomes" id="UP000008323">
    <property type="component" value="Chromosome"/>
</dbReference>
<dbReference type="GO" id="GO:0005829">
    <property type="term" value="C:cytosol"/>
    <property type="evidence" value="ECO:0007669"/>
    <property type="project" value="TreeGrafter"/>
</dbReference>
<dbReference type="GO" id="GO:0052906">
    <property type="term" value="F:tRNA (guanine(37)-N1)-methyltransferase activity"/>
    <property type="evidence" value="ECO:0007669"/>
    <property type="project" value="UniProtKB-UniRule"/>
</dbReference>
<dbReference type="GO" id="GO:0002939">
    <property type="term" value="P:tRNA N1-guanine methylation"/>
    <property type="evidence" value="ECO:0007669"/>
    <property type="project" value="TreeGrafter"/>
</dbReference>
<dbReference type="CDD" id="cd18080">
    <property type="entry name" value="TrmD-like"/>
    <property type="match status" value="1"/>
</dbReference>
<dbReference type="FunFam" id="1.10.1270.20:FF:000001">
    <property type="entry name" value="tRNA (guanine-N(1)-)-methyltransferase"/>
    <property type="match status" value="1"/>
</dbReference>
<dbReference type="FunFam" id="3.40.1280.10:FF:000001">
    <property type="entry name" value="tRNA (guanine-N(1)-)-methyltransferase"/>
    <property type="match status" value="1"/>
</dbReference>
<dbReference type="Gene3D" id="3.40.1280.10">
    <property type="match status" value="1"/>
</dbReference>
<dbReference type="Gene3D" id="1.10.1270.20">
    <property type="entry name" value="tRNA(m1g37)methyltransferase, domain 2"/>
    <property type="match status" value="1"/>
</dbReference>
<dbReference type="HAMAP" id="MF_00605">
    <property type="entry name" value="TrmD"/>
    <property type="match status" value="1"/>
</dbReference>
<dbReference type="InterPro" id="IPR029028">
    <property type="entry name" value="Alpha/beta_knot_MTases"/>
</dbReference>
<dbReference type="InterPro" id="IPR023148">
    <property type="entry name" value="tRNA_m1G_MeTrfase_C_sf"/>
</dbReference>
<dbReference type="InterPro" id="IPR002649">
    <property type="entry name" value="tRNA_m1G_MeTrfase_TrmD"/>
</dbReference>
<dbReference type="InterPro" id="IPR029026">
    <property type="entry name" value="tRNA_m1G_MTases_N"/>
</dbReference>
<dbReference type="InterPro" id="IPR016009">
    <property type="entry name" value="tRNA_MeTrfase_TRMD/TRM10"/>
</dbReference>
<dbReference type="NCBIfam" id="NF000648">
    <property type="entry name" value="PRK00026.1"/>
    <property type="match status" value="1"/>
</dbReference>
<dbReference type="NCBIfam" id="TIGR00088">
    <property type="entry name" value="trmD"/>
    <property type="match status" value="1"/>
</dbReference>
<dbReference type="PANTHER" id="PTHR46417">
    <property type="entry name" value="TRNA (GUANINE-N(1)-)-METHYLTRANSFERASE"/>
    <property type="match status" value="1"/>
</dbReference>
<dbReference type="PANTHER" id="PTHR46417:SF1">
    <property type="entry name" value="TRNA (GUANINE-N(1)-)-METHYLTRANSFERASE"/>
    <property type="match status" value="1"/>
</dbReference>
<dbReference type="Pfam" id="PF01746">
    <property type="entry name" value="tRNA_m1G_MT"/>
    <property type="match status" value="1"/>
</dbReference>
<dbReference type="PIRSF" id="PIRSF000386">
    <property type="entry name" value="tRNA_mtase"/>
    <property type="match status" value="1"/>
</dbReference>
<dbReference type="SUPFAM" id="SSF75217">
    <property type="entry name" value="alpha/beta knot"/>
    <property type="match status" value="1"/>
</dbReference>
<proteinExistence type="inferred from homology"/>
<accession>B1VAA9</accession>
<comment type="function">
    <text evidence="1">Specifically methylates guanosine-37 in various tRNAs.</text>
</comment>
<comment type="catalytic activity">
    <reaction evidence="1">
        <text>guanosine(37) in tRNA + S-adenosyl-L-methionine = N(1)-methylguanosine(37) in tRNA + S-adenosyl-L-homocysteine + H(+)</text>
        <dbReference type="Rhea" id="RHEA:36899"/>
        <dbReference type="Rhea" id="RHEA-COMP:10145"/>
        <dbReference type="Rhea" id="RHEA-COMP:10147"/>
        <dbReference type="ChEBI" id="CHEBI:15378"/>
        <dbReference type="ChEBI" id="CHEBI:57856"/>
        <dbReference type="ChEBI" id="CHEBI:59789"/>
        <dbReference type="ChEBI" id="CHEBI:73542"/>
        <dbReference type="ChEBI" id="CHEBI:74269"/>
        <dbReference type="EC" id="2.1.1.228"/>
    </reaction>
</comment>
<comment type="subunit">
    <text evidence="1">Homodimer.</text>
</comment>
<comment type="subcellular location">
    <subcellularLocation>
        <location evidence="1">Cytoplasm</location>
    </subcellularLocation>
</comment>
<comment type="similarity">
    <text evidence="1">Belongs to the RNA methyltransferase TrmD family.</text>
</comment>
<feature type="chain" id="PRO_1000130193" description="tRNA (guanine-N(1)-)-methyltransferase">
    <location>
        <begin position="1"/>
        <end position="244"/>
    </location>
</feature>
<feature type="binding site" evidence="1">
    <location>
        <position position="111"/>
    </location>
    <ligand>
        <name>S-adenosyl-L-methionine</name>
        <dbReference type="ChEBI" id="CHEBI:59789"/>
    </ligand>
</feature>
<feature type="binding site" evidence="1">
    <location>
        <begin position="130"/>
        <end position="135"/>
    </location>
    <ligand>
        <name>S-adenosyl-L-methionine</name>
        <dbReference type="ChEBI" id="CHEBI:59789"/>
    </ligand>
</feature>
<sequence>MIIEIVTIFPLFFKSFCDNSIIKRALNQQKVQIKIHDLRKYSVNKHQQVDDCVYGGGVGMLLSFPPFFDCLQEIKTPQSKVILLSPQGKIFDQVQANNYASNTPHLIILCGNYEGVDARILKYVDQEISIGDYVLTGGEIAATVVVDAIVRLIPGVIKHESAFSDSHQQGLLKFPQYTRPQIYQNQEVPSVLLSGNHAQIENWRQKESLKITLQKRPDLLINKKLSSKEKVILEEIKQELKNNS</sequence>
<protein>
    <recommendedName>
        <fullName evidence="1">tRNA (guanine-N(1)-)-methyltransferase</fullName>
        <ecNumber evidence="1">2.1.1.228</ecNumber>
    </recommendedName>
    <alternativeName>
        <fullName evidence="1">M1G-methyltransferase</fullName>
    </alternativeName>
    <alternativeName>
        <fullName evidence="1">tRNA [GM37] methyltransferase</fullName>
    </alternativeName>
</protein>
<name>TRMD_PHYAS</name>
<gene>
    <name evidence="1" type="primary">trmD</name>
    <name type="ordered locus">PA0548</name>
</gene>
<reference key="1">
    <citation type="journal article" date="2008" name="J. Bacteriol.">
        <title>Comparative genome analysis of 'Candidatus Phytoplasma australiense' (subgroup tuf-Australia I; rp-A) and 'Ca. Phytoplasma asteris' strains OY-M and AY-WB.</title>
        <authorList>
            <person name="Tran-Nguyen L.T."/>
            <person name="Kube M."/>
            <person name="Schneider B."/>
            <person name="Reinhardt R."/>
            <person name="Gibb K.S."/>
        </authorList>
    </citation>
    <scope>NUCLEOTIDE SEQUENCE [LARGE SCALE GENOMIC DNA]</scope>
</reference>
<evidence type="ECO:0000255" key="1">
    <source>
        <dbReference type="HAMAP-Rule" id="MF_00605"/>
    </source>
</evidence>
<keyword id="KW-0963">Cytoplasm</keyword>
<keyword id="KW-0489">Methyltransferase</keyword>
<keyword id="KW-1185">Reference proteome</keyword>
<keyword id="KW-0949">S-adenosyl-L-methionine</keyword>
<keyword id="KW-0808">Transferase</keyword>
<keyword id="KW-0819">tRNA processing</keyword>